<feature type="chain" id="PRO_1000021018" description="Inner membrane-spanning protein YciB">
    <location>
        <begin position="1"/>
        <end position="194"/>
    </location>
</feature>
<feature type="transmembrane region" description="Helical" evidence="1">
    <location>
        <begin position="1"/>
        <end position="21"/>
    </location>
</feature>
<feature type="transmembrane region" description="Helical" evidence="1">
    <location>
        <begin position="49"/>
        <end position="69"/>
    </location>
</feature>
<feature type="transmembrane region" description="Helical" evidence="1">
    <location>
        <begin position="77"/>
        <end position="97"/>
    </location>
</feature>
<feature type="transmembrane region" description="Helical" evidence="1">
    <location>
        <begin position="120"/>
        <end position="140"/>
    </location>
</feature>
<feature type="transmembrane region" description="Helical" evidence="1">
    <location>
        <begin position="150"/>
        <end position="170"/>
    </location>
</feature>
<sequence length="194" mass="22122">MKLLFDFFPIILFFVVYKTTNDIVTATAALIPATAAQVAFSWFKYRKVEKMHLFALVIVVILGGATILFKDDTFIKWKPSVVCWLLAVVFLIGGWVSKKNLYQRMMEANISLPQHAWSKLNYSWVIFNTLLGALNLYVAYHYTQEQWVNFKLFGMLGLSLVFALMQGVYISRHMVEDEPAPSESATGNGDNKSF</sequence>
<organism>
    <name type="scientific">Hahella chejuensis (strain KCTC 2396)</name>
    <dbReference type="NCBI Taxonomy" id="349521"/>
    <lineage>
        <taxon>Bacteria</taxon>
        <taxon>Pseudomonadati</taxon>
        <taxon>Pseudomonadota</taxon>
        <taxon>Gammaproteobacteria</taxon>
        <taxon>Oceanospirillales</taxon>
        <taxon>Hahellaceae</taxon>
        <taxon>Hahella</taxon>
    </lineage>
</organism>
<accession>Q2SK65</accession>
<reference key="1">
    <citation type="journal article" date="2005" name="Nucleic Acids Res.">
        <title>Genomic blueprint of Hahella chejuensis, a marine microbe producing an algicidal agent.</title>
        <authorList>
            <person name="Jeong H."/>
            <person name="Yim J.H."/>
            <person name="Lee C."/>
            <person name="Choi S.-H."/>
            <person name="Park Y.K."/>
            <person name="Yoon S.H."/>
            <person name="Hur C.-G."/>
            <person name="Kang H.-Y."/>
            <person name="Kim D."/>
            <person name="Lee H.H."/>
            <person name="Park K.H."/>
            <person name="Park S.-H."/>
            <person name="Park H.-S."/>
            <person name="Lee H.K."/>
            <person name="Oh T.K."/>
            <person name="Kim J.F."/>
        </authorList>
    </citation>
    <scope>NUCLEOTIDE SEQUENCE [LARGE SCALE GENOMIC DNA]</scope>
    <source>
        <strain>KCTC 2396</strain>
    </source>
</reference>
<comment type="function">
    <text evidence="1">Plays a role in cell envelope biogenesis, maintenance of cell envelope integrity and membrane homeostasis.</text>
</comment>
<comment type="subcellular location">
    <subcellularLocation>
        <location evidence="1">Cell inner membrane</location>
        <topology evidence="1">Multi-pass membrane protein</topology>
    </subcellularLocation>
</comment>
<comment type="similarity">
    <text evidence="1">Belongs to the YciB family.</text>
</comment>
<gene>
    <name evidence="1" type="primary">yciB</name>
    <name type="ordered locus">HCH_02130</name>
</gene>
<proteinExistence type="inferred from homology"/>
<protein>
    <recommendedName>
        <fullName evidence="1">Inner membrane-spanning protein YciB</fullName>
    </recommendedName>
</protein>
<dbReference type="EMBL" id="CP000155">
    <property type="protein sequence ID" value="ABC28959.1"/>
    <property type="molecule type" value="Genomic_DNA"/>
</dbReference>
<dbReference type="RefSeq" id="WP_011396029.1">
    <property type="nucleotide sequence ID" value="NC_007645.1"/>
</dbReference>
<dbReference type="STRING" id="349521.HCH_02130"/>
<dbReference type="KEGG" id="hch:HCH_02130"/>
<dbReference type="eggNOG" id="COG2917">
    <property type="taxonomic scope" value="Bacteria"/>
</dbReference>
<dbReference type="HOGENOM" id="CLU_089554_2_0_6"/>
<dbReference type="OrthoDB" id="9788219at2"/>
<dbReference type="Proteomes" id="UP000000238">
    <property type="component" value="Chromosome"/>
</dbReference>
<dbReference type="GO" id="GO:0005886">
    <property type="term" value="C:plasma membrane"/>
    <property type="evidence" value="ECO:0007669"/>
    <property type="project" value="UniProtKB-SubCell"/>
</dbReference>
<dbReference type="HAMAP" id="MF_00189">
    <property type="entry name" value="YciB"/>
    <property type="match status" value="1"/>
</dbReference>
<dbReference type="InterPro" id="IPR006008">
    <property type="entry name" value="YciB"/>
</dbReference>
<dbReference type="NCBIfam" id="TIGR00997">
    <property type="entry name" value="ispZ"/>
    <property type="match status" value="1"/>
</dbReference>
<dbReference type="NCBIfam" id="NF001325">
    <property type="entry name" value="PRK00259.1-3"/>
    <property type="match status" value="1"/>
</dbReference>
<dbReference type="PANTHER" id="PTHR36917:SF1">
    <property type="entry name" value="INNER MEMBRANE-SPANNING PROTEIN YCIB"/>
    <property type="match status" value="1"/>
</dbReference>
<dbReference type="PANTHER" id="PTHR36917">
    <property type="entry name" value="INTRACELLULAR SEPTATION PROTEIN A-RELATED"/>
    <property type="match status" value="1"/>
</dbReference>
<dbReference type="Pfam" id="PF04279">
    <property type="entry name" value="IspA"/>
    <property type="match status" value="1"/>
</dbReference>
<evidence type="ECO:0000255" key="1">
    <source>
        <dbReference type="HAMAP-Rule" id="MF_00189"/>
    </source>
</evidence>
<name>YCIB_HAHCH</name>
<keyword id="KW-0997">Cell inner membrane</keyword>
<keyword id="KW-1003">Cell membrane</keyword>
<keyword id="KW-0472">Membrane</keyword>
<keyword id="KW-1185">Reference proteome</keyword>
<keyword id="KW-0812">Transmembrane</keyword>
<keyword id="KW-1133">Transmembrane helix</keyword>